<reference key="1">
    <citation type="journal article" date="2006" name="BMC Genomics">
        <title>Comparative genome analysis: selection pressure on the Borrelia vls cassettes is essential for infectivity.</title>
        <authorList>
            <person name="Gloeckner G."/>
            <person name="Schulte-Spechtel U."/>
            <person name="Schilhabel M."/>
            <person name="Felder M."/>
            <person name="Suehnel J."/>
            <person name="Wilske B."/>
            <person name="Platzer M."/>
        </authorList>
    </citation>
    <scope>NUCLEOTIDE SEQUENCE [LARGE SCALE GENOMIC DNA]</scope>
    <source>
        <strain>PKo</strain>
    </source>
</reference>
<reference key="2">
    <citation type="journal article" date="2011" name="J. Bacteriol.">
        <title>Whole-genome sequences of two Borrelia afzelii and two Borrelia garinii Lyme disease agent isolates.</title>
        <authorList>
            <person name="Casjens S.R."/>
            <person name="Mongodin E.F."/>
            <person name="Qiu W.G."/>
            <person name="Dunn J.J."/>
            <person name="Luft B.J."/>
            <person name="Fraser-Liggett C.M."/>
            <person name="Schutzer S.E."/>
        </authorList>
    </citation>
    <scope>NUCLEOTIDE SEQUENCE [LARGE SCALE GENOMIC DNA]</scope>
    <source>
        <strain>PKo</strain>
    </source>
</reference>
<dbReference type="EMBL" id="CP000395">
    <property type="protein sequence ID" value="ABH01455.1"/>
    <property type="molecule type" value="Genomic_DNA"/>
</dbReference>
<dbReference type="EMBL" id="CP002933">
    <property type="protein sequence ID" value="AEL69420.1"/>
    <property type="molecule type" value="Genomic_DNA"/>
</dbReference>
<dbReference type="RefSeq" id="WP_004790224.1">
    <property type="nucleotide sequence ID" value="NZ_CP160066.1"/>
</dbReference>
<dbReference type="SMR" id="Q0SNX3"/>
<dbReference type="STRING" id="29518.BLA32_03360"/>
<dbReference type="GeneID" id="77265029"/>
<dbReference type="KEGG" id="baf:BAPKO_0193"/>
<dbReference type="KEGG" id="bafz:BafPKo_0187"/>
<dbReference type="PATRIC" id="fig|390236.22.peg.185"/>
<dbReference type="eggNOG" id="COG0290">
    <property type="taxonomic scope" value="Bacteria"/>
</dbReference>
<dbReference type="HOGENOM" id="CLU_054919_3_2_12"/>
<dbReference type="OrthoDB" id="9806014at2"/>
<dbReference type="Proteomes" id="UP000005216">
    <property type="component" value="Chromosome"/>
</dbReference>
<dbReference type="GO" id="GO:0005829">
    <property type="term" value="C:cytosol"/>
    <property type="evidence" value="ECO:0007669"/>
    <property type="project" value="TreeGrafter"/>
</dbReference>
<dbReference type="GO" id="GO:0016020">
    <property type="term" value="C:membrane"/>
    <property type="evidence" value="ECO:0007669"/>
    <property type="project" value="TreeGrafter"/>
</dbReference>
<dbReference type="GO" id="GO:0043022">
    <property type="term" value="F:ribosome binding"/>
    <property type="evidence" value="ECO:0007669"/>
    <property type="project" value="TreeGrafter"/>
</dbReference>
<dbReference type="GO" id="GO:0003743">
    <property type="term" value="F:translation initiation factor activity"/>
    <property type="evidence" value="ECO:0007669"/>
    <property type="project" value="UniProtKB-UniRule"/>
</dbReference>
<dbReference type="GO" id="GO:0032790">
    <property type="term" value="P:ribosome disassembly"/>
    <property type="evidence" value="ECO:0007669"/>
    <property type="project" value="TreeGrafter"/>
</dbReference>
<dbReference type="FunFam" id="3.30.110.10:FF:000001">
    <property type="entry name" value="Translation initiation factor IF-3"/>
    <property type="match status" value="1"/>
</dbReference>
<dbReference type="Gene3D" id="3.30.110.10">
    <property type="entry name" value="Translation initiation factor 3 (IF-3), C-terminal domain"/>
    <property type="match status" value="1"/>
</dbReference>
<dbReference type="Gene3D" id="3.10.20.80">
    <property type="entry name" value="Translation initiation factor 3 (IF-3), N-terminal domain"/>
    <property type="match status" value="1"/>
</dbReference>
<dbReference type="HAMAP" id="MF_00080">
    <property type="entry name" value="IF_3"/>
    <property type="match status" value="1"/>
</dbReference>
<dbReference type="InterPro" id="IPR036788">
    <property type="entry name" value="T_IF-3_C_sf"/>
</dbReference>
<dbReference type="InterPro" id="IPR036787">
    <property type="entry name" value="T_IF-3_N_sf"/>
</dbReference>
<dbReference type="InterPro" id="IPR019813">
    <property type="entry name" value="Translation_initiation_fac3_CS"/>
</dbReference>
<dbReference type="InterPro" id="IPR001288">
    <property type="entry name" value="Translation_initiation_fac_3"/>
</dbReference>
<dbReference type="InterPro" id="IPR019815">
    <property type="entry name" value="Translation_initiation_fac_3_C"/>
</dbReference>
<dbReference type="InterPro" id="IPR019814">
    <property type="entry name" value="Translation_initiation_fac_3_N"/>
</dbReference>
<dbReference type="NCBIfam" id="TIGR00168">
    <property type="entry name" value="infC"/>
    <property type="match status" value="1"/>
</dbReference>
<dbReference type="PANTHER" id="PTHR10938">
    <property type="entry name" value="TRANSLATION INITIATION FACTOR IF-3"/>
    <property type="match status" value="1"/>
</dbReference>
<dbReference type="PANTHER" id="PTHR10938:SF0">
    <property type="entry name" value="TRANSLATION INITIATION FACTOR IF-3, MITOCHONDRIAL"/>
    <property type="match status" value="1"/>
</dbReference>
<dbReference type="Pfam" id="PF00707">
    <property type="entry name" value="IF3_C"/>
    <property type="match status" value="1"/>
</dbReference>
<dbReference type="Pfam" id="PF05198">
    <property type="entry name" value="IF3_N"/>
    <property type="match status" value="1"/>
</dbReference>
<dbReference type="SUPFAM" id="SSF55200">
    <property type="entry name" value="Translation initiation factor IF3, C-terminal domain"/>
    <property type="match status" value="1"/>
</dbReference>
<dbReference type="SUPFAM" id="SSF54364">
    <property type="entry name" value="Translation initiation factor IF3, N-terminal domain"/>
    <property type="match status" value="1"/>
</dbReference>
<dbReference type="PROSITE" id="PS00938">
    <property type="entry name" value="IF3"/>
    <property type="match status" value="1"/>
</dbReference>
<evidence type="ECO:0000255" key="1">
    <source>
        <dbReference type="HAMAP-Rule" id="MF_00080"/>
    </source>
</evidence>
<feature type="chain" id="PRO_1000004530" description="Translation initiation factor IF-3">
    <location>
        <begin position="1"/>
        <end position="186"/>
    </location>
</feature>
<organism>
    <name type="scientific">Borreliella afzelii (strain PKo)</name>
    <name type="common">Borrelia afzelii</name>
    <dbReference type="NCBI Taxonomy" id="390236"/>
    <lineage>
        <taxon>Bacteria</taxon>
        <taxon>Pseudomonadati</taxon>
        <taxon>Spirochaetota</taxon>
        <taxon>Spirochaetia</taxon>
        <taxon>Spirochaetales</taxon>
        <taxon>Borreliaceae</taxon>
        <taxon>Borreliella</taxon>
    </lineage>
</organism>
<sequence>MINRNANRDRDRSRSNDKELKINYRIKAREVRVIFENGTQEVLSIEDAIKKAKEAGLDLVEVSPNVSPPVCKIIDYGKYKFHQEKRQKEQKKNQKVIKLKEVRMQPKIDTHDLDFKSKNILSFLKDGNKVKVTIRFRGRELAHTYLGYGILNSILEKVGDVNYVLESAAKMEGKTMFLIVAPKFKK</sequence>
<gene>
    <name evidence="1" type="primary">infC</name>
    <name type="ordered locus">BAPKO_0193</name>
    <name type="ordered locus">BafPKo_0187</name>
</gene>
<name>IF3_BORAP</name>
<protein>
    <recommendedName>
        <fullName evidence="1">Translation initiation factor IF-3</fullName>
    </recommendedName>
</protein>
<keyword id="KW-0963">Cytoplasm</keyword>
<keyword id="KW-0396">Initiation factor</keyword>
<keyword id="KW-0648">Protein biosynthesis</keyword>
<accession>Q0SNX3</accession>
<accession>G0IR34</accession>
<proteinExistence type="inferred from homology"/>
<comment type="function">
    <text evidence="1">IF-3 binds to the 30S ribosomal subunit and shifts the equilibrium between 70S ribosomes and their 50S and 30S subunits in favor of the free subunits, thus enhancing the availability of 30S subunits on which protein synthesis initiation begins.</text>
</comment>
<comment type="subunit">
    <text evidence="1">Monomer.</text>
</comment>
<comment type="subcellular location">
    <subcellularLocation>
        <location evidence="1">Cytoplasm</location>
    </subcellularLocation>
</comment>
<comment type="similarity">
    <text evidence="1">Belongs to the IF-3 family.</text>
</comment>